<proteinExistence type="inferred from homology"/>
<organism>
    <name type="scientific">Cupriavidus metallidurans (strain ATCC 43123 / DSM 2839 / NBRC 102507 / CH34)</name>
    <name type="common">Ralstonia metallidurans</name>
    <dbReference type="NCBI Taxonomy" id="266264"/>
    <lineage>
        <taxon>Bacteria</taxon>
        <taxon>Pseudomonadati</taxon>
        <taxon>Pseudomonadota</taxon>
        <taxon>Betaproteobacteria</taxon>
        <taxon>Burkholderiales</taxon>
        <taxon>Burkholderiaceae</taxon>
        <taxon>Cupriavidus</taxon>
    </lineage>
</organism>
<protein>
    <recommendedName>
        <fullName evidence="1">Large ribosomal subunit protein uL11</fullName>
    </recommendedName>
    <alternativeName>
        <fullName evidence="2">50S ribosomal protein L11</fullName>
    </alternativeName>
</protein>
<feature type="chain" id="PRO_0000258194" description="Large ribosomal subunit protein uL11">
    <location>
        <begin position="1"/>
        <end position="143"/>
    </location>
</feature>
<reference key="1">
    <citation type="journal article" date="2010" name="PLoS ONE">
        <title>The complete genome sequence of Cupriavidus metallidurans strain CH34, a master survivalist in harsh and anthropogenic environments.</title>
        <authorList>
            <person name="Janssen P.J."/>
            <person name="Van Houdt R."/>
            <person name="Moors H."/>
            <person name="Monsieurs P."/>
            <person name="Morin N."/>
            <person name="Michaux A."/>
            <person name="Benotmane M.A."/>
            <person name="Leys N."/>
            <person name="Vallaeys T."/>
            <person name="Lapidus A."/>
            <person name="Monchy S."/>
            <person name="Medigue C."/>
            <person name="Taghavi S."/>
            <person name="McCorkle S."/>
            <person name="Dunn J."/>
            <person name="van der Lelie D."/>
            <person name="Mergeay M."/>
        </authorList>
    </citation>
    <scope>NUCLEOTIDE SEQUENCE [LARGE SCALE GENOMIC DNA]</scope>
    <source>
        <strain>ATCC 43123 / DSM 2839 / NBRC 102507 / CH34</strain>
    </source>
</reference>
<comment type="function">
    <text evidence="1">Forms part of the ribosomal stalk which helps the ribosome interact with GTP-bound translation factors.</text>
</comment>
<comment type="subunit">
    <text evidence="1">Part of the ribosomal stalk of the 50S ribosomal subunit. Interacts with L10 and the large rRNA to form the base of the stalk. L10 forms an elongated spine to which L12 dimers bind in a sequential fashion forming a multimeric L10(L12)X complex.</text>
</comment>
<comment type="PTM">
    <text evidence="1">One or more lysine residues are methylated.</text>
</comment>
<comment type="similarity">
    <text evidence="1">Belongs to the universal ribosomal protein uL11 family.</text>
</comment>
<sequence length="143" mass="14822">MAKKIIGFIKLQIPAGKANPSPPVGPALGQRGLNIMEFCKAFNAQTQGMEPGLPVPVVITAFADKSFTFVMKSPPATVLIKKAAGITKGSPKPHTDKVGKITRAQAEEIAKAKNADLTAADLDAAVRTIAGSARSMGITVEGL</sequence>
<accession>Q1LI16</accession>
<keyword id="KW-0488">Methylation</keyword>
<keyword id="KW-1185">Reference proteome</keyword>
<keyword id="KW-0687">Ribonucleoprotein</keyword>
<keyword id="KW-0689">Ribosomal protein</keyword>
<keyword id="KW-0694">RNA-binding</keyword>
<keyword id="KW-0699">rRNA-binding</keyword>
<name>RL11_CUPMC</name>
<dbReference type="EMBL" id="CP000352">
    <property type="protein sequence ID" value="ABF10210.1"/>
    <property type="molecule type" value="Genomic_DNA"/>
</dbReference>
<dbReference type="RefSeq" id="WP_010810467.1">
    <property type="nucleotide sequence ID" value="NC_007973.1"/>
</dbReference>
<dbReference type="SMR" id="Q1LI16"/>
<dbReference type="STRING" id="266264.Rmet_3338"/>
<dbReference type="GeneID" id="29760665"/>
<dbReference type="KEGG" id="rme:Rmet_3338"/>
<dbReference type="eggNOG" id="COG0080">
    <property type="taxonomic scope" value="Bacteria"/>
</dbReference>
<dbReference type="HOGENOM" id="CLU_074237_2_0_4"/>
<dbReference type="Proteomes" id="UP000002429">
    <property type="component" value="Chromosome"/>
</dbReference>
<dbReference type="GO" id="GO:0022625">
    <property type="term" value="C:cytosolic large ribosomal subunit"/>
    <property type="evidence" value="ECO:0007669"/>
    <property type="project" value="TreeGrafter"/>
</dbReference>
<dbReference type="GO" id="GO:0070180">
    <property type="term" value="F:large ribosomal subunit rRNA binding"/>
    <property type="evidence" value="ECO:0007669"/>
    <property type="project" value="UniProtKB-UniRule"/>
</dbReference>
<dbReference type="GO" id="GO:0003735">
    <property type="term" value="F:structural constituent of ribosome"/>
    <property type="evidence" value="ECO:0007669"/>
    <property type="project" value="InterPro"/>
</dbReference>
<dbReference type="GO" id="GO:0006412">
    <property type="term" value="P:translation"/>
    <property type="evidence" value="ECO:0007669"/>
    <property type="project" value="UniProtKB-UniRule"/>
</dbReference>
<dbReference type="CDD" id="cd00349">
    <property type="entry name" value="Ribosomal_L11"/>
    <property type="match status" value="1"/>
</dbReference>
<dbReference type="FunFam" id="1.10.10.250:FF:000001">
    <property type="entry name" value="50S ribosomal protein L11"/>
    <property type="match status" value="1"/>
</dbReference>
<dbReference type="FunFam" id="3.30.1550.10:FF:000001">
    <property type="entry name" value="50S ribosomal protein L11"/>
    <property type="match status" value="1"/>
</dbReference>
<dbReference type="Gene3D" id="1.10.10.250">
    <property type="entry name" value="Ribosomal protein L11, C-terminal domain"/>
    <property type="match status" value="1"/>
</dbReference>
<dbReference type="Gene3D" id="3.30.1550.10">
    <property type="entry name" value="Ribosomal protein L11/L12, N-terminal domain"/>
    <property type="match status" value="1"/>
</dbReference>
<dbReference type="HAMAP" id="MF_00736">
    <property type="entry name" value="Ribosomal_uL11"/>
    <property type="match status" value="1"/>
</dbReference>
<dbReference type="InterPro" id="IPR000911">
    <property type="entry name" value="Ribosomal_uL11"/>
</dbReference>
<dbReference type="InterPro" id="IPR006519">
    <property type="entry name" value="Ribosomal_uL11_bac-typ"/>
</dbReference>
<dbReference type="InterPro" id="IPR020783">
    <property type="entry name" value="Ribosomal_uL11_C"/>
</dbReference>
<dbReference type="InterPro" id="IPR036769">
    <property type="entry name" value="Ribosomal_uL11_C_sf"/>
</dbReference>
<dbReference type="InterPro" id="IPR020785">
    <property type="entry name" value="Ribosomal_uL11_CS"/>
</dbReference>
<dbReference type="InterPro" id="IPR020784">
    <property type="entry name" value="Ribosomal_uL11_N"/>
</dbReference>
<dbReference type="InterPro" id="IPR036796">
    <property type="entry name" value="Ribosomal_uL11_N_sf"/>
</dbReference>
<dbReference type="NCBIfam" id="TIGR01632">
    <property type="entry name" value="L11_bact"/>
    <property type="match status" value="1"/>
</dbReference>
<dbReference type="PANTHER" id="PTHR11661">
    <property type="entry name" value="60S RIBOSOMAL PROTEIN L12"/>
    <property type="match status" value="1"/>
</dbReference>
<dbReference type="PANTHER" id="PTHR11661:SF1">
    <property type="entry name" value="LARGE RIBOSOMAL SUBUNIT PROTEIN UL11M"/>
    <property type="match status" value="1"/>
</dbReference>
<dbReference type="Pfam" id="PF00298">
    <property type="entry name" value="Ribosomal_L11"/>
    <property type="match status" value="1"/>
</dbReference>
<dbReference type="Pfam" id="PF03946">
    <property type="entry name" value="Ribosomal_L11_N"/>
    <property type="match status" value="1"/>
</dbReference>
<dbReference type="SMART" id="SM00649">
    <property type="entry name" value="RL11"/>
    <property type="match status" value="1"/>
</dbReference>
<dbReference type="SUPFAM" id="SSF54747">
    <property type="entry name" value="Ribosomal L11/L12e N-terminal domain"/>
    <property type="match status" value="1"/>
</dbReference>
<dbReference type="SUPFAM" id="SSF46906">
    <property type="entry name" value="Ribosomal protein L11, C-terminal domain"/>
    <property type="match status" value="1"/>
</dbReference>
<dbReference type="PROSITE" id="PS00359">
    <property type="entry name" value="RIBOSOMAL_L11"/>
    <property type="match status" value="1"/>
</dbReference>
<gene>
    <name evidence="1" type="primary">rplK</name>
    <name type="ordered locus">Rmet_3338</name>
</gene>
<evidence type="ECO:0000255" key="1">
    <source>
        <dbReference type="HAMAP-Rule" id="MF_00736"/>
    </source>
</evidence>
<evidence type="ECO:0000305" key="2"/>